<gene>
    <name type="primary">CCT8</name>
    <name type="ordered locus">ECU04_1020</name>
</gene>
<keyword id="KW-0067">ATP-binding</keyword>
<keyword id="KW-0143">Chaperone</keyword>
<keyword id="KW-0963">Cytoplasm</keyword>
<keyword id="KW-0547">Nucleotide-binding</keyword>
<keyword id="KW-1185">Reference proteome</keyword>
<organism>
    <name type="scientific">Encephalitozoon cuniculi (strain GB-M1)</name>
    <name type="common">Microsporidian parasite</name>
    <dbReference type="NCBI Taxonomy" id="284813"/>
    <lineage>
        <taxon>Eukaryota</taxon>
        <taxon>Fungi</taxon>
        <taxon>Fungi incertae sedis</taxon>
        <taxon>Microsporidia</taxon>
        <taxon>Unikaryonidae</taxon>
        <taxon>Encephalitozoon</taxon>
    </lineage>
</organism>
<protein>
    <recommendedName>
        <fullName>T-complex protein 1 subunit theta</fullName>
        <shortName>TCP-1-theta</shortName>
    </recommendedName>
    <alternativeName>
        <fullName>CCT-theta</fullName>
    </alternativeName>
</protein>
<comment type="function">
    <text evidence="1">Molecular chaperone; assists the folding of proteins upon ATP hydrolysis.</text>
</comment>
<comment type="subunit">
    <text evidence="1">Component of the T-complex protein 1 (TCP1) complex.</text>
</comment>
<comment type="subcellular location">
    <subcellularLocation>
        <location evidence="1">Cytoplasm</location>
    </subcellularLocation>
</comment>
<comment type="developmental stage">
    <text evidence="2">Expressed in late sporogonial stages.</text>
</comment>
<comment type="similarity">
    <text evidence="3">Belongs to the TCP-1 chaperonin family.</text>
</comment>
<proteinExistence type="evidence at protein level"/>
<accession>Q8SS33</accession>
<feature type="chain" id="PRO_0000378559" description="T-complex protein 1 subunit theta">
    <location>
        <begin position="1"/>
        <end position="485"/>
    </location>
</feature>
<dbReference type="EMBL" id="AL590444">
    <property type="protein sequence ID" value="CAD25290.1"/>
    <property type="molecule type" value="Genomic_DNA"/>
</dbReference>
<dbReference type="RefSeq" id="NP_584786.1">
    <property type="nucleotide sequence ID" value="NM_001041136.1"/>
</dbReference>
<dbReference type="SMR" id="Q8SS33"/>
<dbReference type="STRING" id="284813.Q8SS33"/>
<dbReference type="GeneID" id="858934"/>
<dbReference type="KEGG" id="ecu:ECU04_1020"/>
<dbReference type="VEuPathDB" id="MicrosporidiaDB:ECU04_1020"/>
<dbReference type="HOGENOM" id="CLU_008891_4_3_1"/>
<dbReference type="InParanoid" id="Q8SS33"/>
<dbReference type="OMA" id="YNCPLDI"/>
<dbReference type="OrthoDB" id="1748577at2759"/>
<dbReference type="Proteomes" id="UP000000819">
    <property type="component" value="Chromosome IV"/>
</dbReference>
<dbReference type="GO" id="GO:0005737">
    <property type="term" value="C:cytoplasm"/>
    <property type="evidence" value="ECO:0007669"/>
    <property type="project" value="UniProtKB-SubCell"/>
</dbReference>
<dbReference type="GO" id="GO:0005524">
    <property type="term" value="F:ATP binding"/>
    <property type="evidence" value="ECO:0007669"/>
    <property type="project" value="UniProtKB-KW"/>
</dbReference>
<dbReference type="GO" id="GO:0140662">
    <property type="term" value="F:ATP-dependent protein folding chaperone"/>
    <property type="evidence" value="ECO:0007669"/>
    <property type="project" value="InterPro"/>
</dbReference>
<dbReference type="Gene3D" id="3.50.7.10">
    <property type="entry name" value="GroEL"/>
    <property type="match status" value="1"/>
</dbReference>
<dbReference type="Gene3D" id="1.10.560.10">
    <property type="entry name" value="GroEL-like equatorial domain"/>
    <property type="match status" value="1"/>
</dbReference>
<dbReference type="Gene3D" id="3.30.260.10">
    <property type="entry name" value="TCP-1-like chaperonin intermediate domain"/>
    <property type="match status" value="1"/>
</dbReference>
<dbReference type="InterPro" id="IPR017998">
    <property type="entry name" value="Chaperone_TCP-1"/>
</dbReference>
<dbReference type="InterPro" id="IPR002423">
    <property type="entry name" value="Cpn60/GroEL/TCP-1"/>
</dbReference>
<dbReference type="InterPro" id="IPR027409">
    <property type="entry name" value="GroEL-like_apical_dom_sf"/>
</dbReference>
<dbReference type="InterPro" id="IPR027413">
    <property type="entry name" value="GROEL-like_equatorial_sf"/>
</dbReference>
<dbReference type="InterPro" id="IPR027410">
    <property type="entry name" value="TCP-1-like_intermed_sf"/>
</dbReference>
<dbReference type="PANTHER" id="PTHR11353">
    <property type="entry name" value="CHAPERONIN"/>
    <property type="match status" value="1"/>
</dbReference>
<dbReference type="Pfam" id="PF00118">
    <property type="entry name" value="Cpn60_TCP1"/>
    <property type="match status" value="1"/>
</dbReference>
<dbReference type="PRINTS" id="PR00304">
    <property type="entry name" value="TCOMPLEXTCP1"/>
</dbReference>
<dbReference type="SUPFAM" id="SSF52029">
    <property type="entry name" value="GroEL apical domain-like"/>
    <property type="match status" value="1"/>
</dbReference>
<dbReference type="SUPFAM" id="SSF48592">
    <property type="entry name" value="GroEL equatorial domain-like"/>
    <property type="match status" value="1"/>
</dbReference>
<dbReference type="SUPFAM" id="SSF54849">
    <property type="entry name" value="GroEL-intermediate domain like"/>
    <property type="match status" value="1"/>
</dbReference>
<evidence type="ECO:0000250" key="1"/>
<evidence type="ECO:0000269" key="2">
    <source>
    </source>
</evidence>
<evidence type="ECO:0000305" key="3"/>
<name>TCPQ_ENCCU</name>
<reference key="1">
    <citation type="journal article" date="2001" name="Nature">
        <title>Genome sequence and gene compaction of the eukaryote parasite Encephalitozoon cuniculi.</title>
        <authorList>
            <person name="Katinka M.D."/>
            <person name="Duprat S."/>
            <person name="Cornillot E."/>
            <person name="Metenier G."/>
            <person name="Thomarat F."/>
            <person name="Prensier G."/>
            <person name="Barbe V."/>
            <person name="Peyretaillade E."/>
            <person name="Brottier P."/>
            <person name="Wincker P."/>
            <person name="Delbac F."/>
            <person name="El Alaoui H."/>
            <person name="Peyret P."/>
            <person name="Saurin W."/>
            <person name="Gouy M."/>
            <person name="Weissenbach J."/>
            <person name="Vivares C.P."/>
        </authorList>
    </citation>
    <scope>NUCLEOTIDE SEQUENCE [LARGE SCALE GENOMIC DNA]</scope>
    <source>
        <strain>GB-M1</strain>
    </source>
</reference>
<reference key="2">
    <citation type="journal article" date="2006" name="Proteomics">
        <title>Proteomic analysis of the eukaryotic parasite Encephalitozoon cuniculi (microsporidia): a reference map for proteins expressed in late sporogonial stages.</title>
        <authorList>
            <person name="Brosson D."/>
            <person name="Kuhn L."/>
            <person name="Delbac F."/>
            <person name="Garin J."/>
            <person name="Vivares C.P."/>
            <person name="Texier C."/>
        </authorList>
    </citation>
    <scope>IDENTIFICATION BY MASS SPECTROMETRY [LARGE SCALE ANALYSIS]</scope>
    <scope>DEVELOPMENTAL STAGE</scope>
</reference>
<sequence length="485" mass="53952">MDIGQTHLGGLISNSQQDEKVRYHIVGSRVRMACNLVKSLYGGSHRSKLIVNGYGQILLSSQPGVIYDNVKVNHPLVKLLQEYVKKMDVIGDGATFFVVLVSELIQEAIDVIGRGMKPACFSSLLREAHKEIDDLGRELLVEHRIDFEDKESISMVLRGVLKDKWLEEIVVEGISLARSFSSESIRVCKVACGSVEDSYVVEGMVFNRLPEGEVKHARQGRTSIYNCPLDISRTELKGTVLMRTASELLSFSKEENKRIKELVESIGADVIICSGKVDKIYLDFLNKGRKLVFRITSKYDLRRIRELLGGHILSTLEPPAEGSMGVVSEVATFREGSTEYTKFISGSKKVYTLVLKNSVQAVLDEHERMVQKALVVLSKNVSGGKIGLVDGAGRFERRLSKAFLERSAGLSGGKSLAYKCIGKALGTFGSSDVEVYDIYNAKIKALKYSMEFVSTLFETSDYLIGRPEALNIGPRNNQHWDEEDH</sequence>